<proteinExistence type="evidence at protein level"/>
<organism>
    <name type="scientific">Plasmodium falciparum (isolate CDC / Honduras)</name>
    <dbReference type="NCBI Taxonomy" id="5836"/>
    <lineage>
        <taxon>Eukaryota</taxon>
        <taxon>Sar</taxon>
        <taxon>Alveolata</taxon>
        <taxon>Apicomplexa</taxon>
        <taxon>Aconoidasida</taxon>
        <taxon>Haemosporida</taxon>
        <taxon>Plasmodiidae</taxon>
        <taxon>Plasmodium</taxon>
        <taxon>Plasmodium (Laverania)</taxon>
    </lineage>
</organism>
<keyword id="KW-1003">Cell membrane</keyword>
<keyword id="KW-1015">Disulfide bond</keyword>
<keyword id="KW-0325">Glycoprotein</keyword>
<keyword id="KW-0378">Hydrolase</keyword>
<keyword id="KW-0461">Malaria</keyword>
<keyword id="KW-0472">Membrane</keyword>
<keyword id="KW-0597">Phosphoprotein</keyword>
<keyword id="KW-0645">Protease</keyword>
<keyword id="KW-0964">Secreted</keyword>
<keyword id="KW-0732">Signal</keyword>
<keyword id="KW-0788">Thiol protease</keyword>
<keyword id="KW-0865">Zymogen</keyword>
<gene>
    <name evidence="1" type="primary">SERA5</name>
    <name evidence="12" type="synonym">SERA</name>
</gene>
<comment type="function">
    <text evidence="1">Plays an essential role during the asexual blood stage development by controlling the kinetics of merozoite egress from host erythrocytes (By similarity). Specifically, prevents premature rupture of the parasitophorous vacuole and host erythrocyte membranes (By similarity).</text>
</comment>
<comment type="function">
    <molecule>p47</molecule>
    <text evidence="6 8">May prevent merozoite phagocytosis by host monocytes via interaction with host VTN at the merozoite surface (PubMed:29567995). Plays a role in parasite growth (PubMed:12244052).</text>
</comment>
<comment type="function">
    <molecule>p50</molecule>
    <text evidence="1">Protease activity is controversial.</text>
</comment>
<comment type="subunit">
    <text evidence="1">May interact (via C-terminus) with PTKL (via SAM domain).</text>
</comment>
<comment type="subunit">
    <molecule>p47</molecule>
    <text evidence="8">Interacts (via C-terminus) with human VTN (via hemopexin repeat 2); may form heterotetramers of two VTN and SERA5 P47 heterodimers; the interaction may protect merozoites from phagocytosis by host monocytes; VTN glycosylation appears to be dispensable for the interaction.</text>
</comment>
<comment type="subunit">
    <molecule>p50</molecule>
    <text evidence="1">Monomer (By similarity). Interacts with kinase CPK1/CDPK1 at the schizont stage (By similarity).</text>
</comment>
<comment type="subcellular location">
    <molecule>Serine-repeat antigen protein 5</molecule>
    <subcellularLocation>
        <location evidence="6 7">Parasitophorous vacuole</location>
    </subcellularLocation>
    <text evidence="1">Secreted in large amount into the parasitophorous vacuole.</text>
</comment>
<comment type="subcellular location">
    <molecule>p18</molecule>
    <subcellularLocation>
        <location evidence="7">Secreted</location>
    </subcellularLocation>
    <text evidence="7">Secreted during merozoite egress from erythrocytes.</text>
</comment>
<comment type="subcellular location">
    <molecule>p25n</molecule>
    <subcellularLocation>
        <location>Secreted</location>
    </subcellularLocation>
    <text evidence="7">Secreted during merozoite egress from erythrocytes.</text>
</comment>
<comment type="subcellular location">
    <molecule>p25c</molecule>
    <subcellularLocation>
        <location evidence="7">Secreted</location>
    </subcellularLocation>
    <text evidence="7">Secreted during merozoite egress from erythrocytes.</text>
</comment>
<comment type="subcellular location">
    <molecule>p47</molecule>
    <subcellularLocation>
        <location evidence="7">Secreted</location>
    </subcellularLocation>
    <subcellularLocation>
        <location evidence="1">Cell membrane</location>
        <topology evidence="1">Peripheral membrane protein</topology>
        <orientation evidence="1">Extracellular side</orientation>
    </subcellularLocation>
    <text evidence="1 7">Secreted during merozoite egress from erythrocytes (PubMed:12421632). Colocalizes at the merozoite surface with human VTN (By similarity).</text>
</comment>
<comment type="subcellular location">
    <molecule>p50</molecule>
    <subcellularLocation>
        <location evidence="7">Secreted</location>
    </subcellularLocation>
    <text evidence="7">Secreted during merozoite egress from erythrocytes.</text>
</comment>
<comment type="subcellular location">
    <molecule>p56</molecule>
    <subcellularLocation>
        <location evidence="1">Secreted</location>
    </subcellularLocation>
    <text evidence="1">Secreted during egress from host erythrocytes.</text>
</comment>
<comment type="developmental stage">
    <molecule>Serine-repeat antigen protein 5</molecule>
    <text evidence="6 7 9">Expressed during parasite asexual blood stages, specifically in immature trophozoite (ring stage), late trophozoite and schizont stages.</text>
</comment>
<comment type="developmental stage">
    <molecule>p47</molecule>
    <text evidence="7">Produced during parasite asexual blood stages, specifically at the late schizont and merozoite stages prior to egress from host erythrocytes.</text>
</comment>
<comment type="developmental stage">
    <molecule>p50</molecule>
    <text evidence="7">Produced during parasite asexual blood stages, specifically at the late schizont and merozoite stages prior to egress from host erythrocytes.</text>
</comment>
<comment type="developmental stage">
    <molecule>p25n</molecule>
    <text evidence="7">Produced during parasite asexual blood stages, specifically at the late schizont and merozoite stages prior to egress from host erythrocytes.</text>
</comment>
<comment type="developmental stage">
    <molecule>p25c</molecule>
    <text evidence="7">Produced during parasite asexual blood stages, specifically at the late schizont and merozoite stages prior to egress from host erythrocytes.</text>
</comment>
<comment type="developmental stage">
    <molecule>p18</molecule>
    <text evidence="7">Produced during parasite asexual blood stages, specifically at the late schizont and merozoite stages prior to egress from host erythrocytes.</text>
</comment>
<comment type="PTM">
    <molecule>p50</molecule>
    <text evidence="1">Phosphorylation by CPK1/CDPK1 increases SERA5 protease activity towards a synthetic peptide in vitro.</text>
</comment>
<comment type="PTM">
    <text evidence="1 7">Just prior to merozoite egress from host erythrocytes, proteolytically cleaved into multiple fragments (PubMed:12421632). Cleaved by SUB1 into p47 and p73, p73 is further cleaved by SUB1 into p56 and p18 and p56 is further processed into p50 by an unidentified protease (By similarity). p47 remains covalently associated with p18 via disulfide bond (By similarity). p47 can be processed into p25n and p25c by SUB1 (By similarity). p25c and p25n remain associated with p18 (By similarity). Proteolytic processing is essential for merozoite egress from host erythrocytes (By similarity). The cleavage of the propeptide to produce p50 is necessary for protease activity and to promote merozoite egress (By similarity).</text>
</comment>
<comment type="biotechnology">
    <molecule>p47</molecule>
    <text evidence="6 8">Potential candidate for the development of parasite blood stage vaccines (PubMed:12244052, PubMed:29567995). In vitro and in vivo, induces antibodies capable of inhibiting parasite growth (PubMed:12244052).</text>
</comment>
<comment type="similarity">
    <text evidence="3 4">Belongs to the peptidase C1 family.</text>
</comment>
<comment type="caution">
    <text evidence="1">In contrast to other serine-repeat antigen proteins (SERA) of the peptidase C1 family, contains a serine residue at the position of the canonical catalytic cysteine and has been shown to lack protease activity (By similarity). However, other studies show that it has protease activity towards synthetic peptides in vitro (By similarity).</text>
</comment>
<evidence type="ECO:0000250" key="1">
    <source>
        <dbReference type="UniProtKB" id="Q9TY95"/>
    </source>
</evidence>
<evidence type="ECO:0000255" key="2"/>
<evidence type="ECO:0000255" key="3">
    <source>
        <dbReference type="PROSITE-ProRule" id="PRU10089"/>
    </source>
</evidence>
<evidence type="ECO:0000255" key="4">
    <source>
        <dbReference type="PROSITE-ProRule" id="PRU10090"/>
    </source>
</evidence>
<evidence type="ECO:0000256" key="5">
    <source>
        <dbReference type="SAM" id="MobiDB-lite"/>
    </source>
</evidence>
<evidence type="ECO:0000269" key="6">
    <source>
    </source>
</evidence>
<evidence type="ECO:0000269" key="7">
    <source>
    </source>
</evidence>
<evidence type="ECO:0000269" key="8">
    <source>
    </source>
</evidence>
<evidence type="ECO:0000269" key="9">
    <source>
    </source>
</evidence>
<evidence type="ECO:0000303" key="10">
    <source>
    </source>
</evidence>
<evidence type="ECO:0000303" key="11">
    <source>
    </source>
</evidence>
<evidence type="ECO:0000303" key="12">
    <source>
    </source>
</evidence>
<evidence type="ECO:0000305" key="13"/>
<sequence>MKSYISLFFILCVIFNKNVIKCTGESQTGNTGGGQAGNTVGDQAGSTGGSPQGSTGASQPGSSEPSNPVSSGHSVSTVSVSQTSTSSEKQDTIQVKSALLKDYMGLKVTGPCNENFIMFLVPHIYIDVDTEDTNIELRTTLKETNNAISFESNSGSLEKKKYVKLPSNGTTGEQGSSTGTVRGDTEPISDSSSSSSSSSSSSSSSSSSSSSSSSSSSSSSSSSSSESLPANGPDSPTVKPPRNLQNICETGKNFKLVVYIKENTLIIKWKVYGETKDTTENNKVDVRKYLINEKETPFTSILIHAYKEHNGTNLIESKNYALGSDIPEKCDTLASNCFLSGNFNIEKCFQCALLVEKENKNDVCYKYLSEDIVSNFKEIKAETEDDDEDDYTEYKLTESIDNILVKMFKTNENNDKSELIKLEEVDDSLKLELMNYCSLLKDVDTTGTLDNYGMGNEMDIFNNLKRLLIYHSEENINTLKNKFRNAAVCLKNVDDWIVNKRGLVLPELNYDLEYFNEHLYNDKNSPEDKDNKGKGVVHVDTTLEKEDTLSYDNSDNMFCNKEYCNRLKDENNCISNLQVEDQGNCDTSWIFASKYHLETIRCMKGYEPTKISALYVANCYKGEHKDRCDEGSSPMEFLQIIEDYGFLPAESNYPYNYVKVGEQCPKVEDHWMNLWDNGKILHNKNEPNSLDGKGYTAYESERFHDNMDAFVKIIKTEVMNKGSVIAYIKAENVMGYEFSGKKVQNLCGDDTADHAVNIVGYGNYVNSEGEKKSYWIVRNSWGPYWGDEGYFKVDMYGPTHCHFNFIHSVVIFNVDLPMNNKTTKKESKIYDYYLKASPEFYHNLYFKNFNVGKKNLFSEKEDNENNKKLGNNYIIFGQDTAGSGQSGKESNTALESAGTSNEVSERVHVYHILKHIKDGKIRMGMRKYIDTQDVNKKHSCTRSYAFNPENYEKCVNLCNVNWKTCEEKTSPGLCLSKLDTNNECYFCYV</sequence>
<feature type="signal peptide" evidence="2">
    <location>
        <begin position="1"/>
        <end position="16"/>
    </location>
</feature>
<feature type="chain" id="PRO_0000026480" description="Serine-repeat antigen protein 5">
    <location>
        <begin position="17"/>
        <end position="989"/>
    </location>
</feature>
<feature type="chain" id="PRO_0000450184" description="p47" evidence="1">
    <location>
        <begin position="23"/>
        <end position="382"/>
    </location>
</feature>
<feature type="chain" id="PRO_0000450185" description="p25n" evidence="1">
    <location>
        <begin position="23"/>
        <end position="184"/>
    </location>
</feature>
<feature type="chain" id="PRO_0000450186" description="p25c" evidence="1">
    <location>
        <begin position="185"/>
        <end position="382"/>
    </location>
</feature>
<feature type="chain" id="PRO_0000450187" description="p56" evidence="1">
    <location>
        <begin position="383"/>
        <end position="878"/>
    </location>
</feature>
<feature type="chain" id="PRO_0000450188" description="p50" evidence="1">
    <location>
        <begin position="383"/>
        <end position="834"/>
    </location>
</feature>
<feature type="propeptide" id="PRO_0000450189" description="Inhibition peptide" evidence="1">
    <location>
        <begin position="835"/>
        <end position="878"/>
    </location>
</feature>
<feature type="chain" id="PRO_0000450190" description="p18" evidence="1">
    <location>
        <begin position="879"/>
        <end position="989"/>
    </location>
</feature>
<feature type="region of interest" description="Disordered" evidence="5">
    <location>
        <begin position="26"/>
        <end position="91"/>
    </location>
</feature>
<feature type="region of interest" description="Disordered" evidence="5">
    <location>
        <begin position="165"/>
        <end position="245"/>
    </location>
</feature>
<feature type="region of interest" description="Interaction with PTKL" evidence="1">
    <location>
        <begin position="208"/>
        <end position="245"/>
    </location>
</feature>
<feature type="region of interest" description="Interaction with host VTN" evidence="1">
    <location>
        <begin position="365"/>
        <end position="382"/>
    </location>
</feature>
<feature type="region of interest" description="Thiol-protease-like" evidence="1">
    <location>
        <begin position="571"/>
        <end position="989"/>
    </location>
</feature>
<feature type="compositionally biased region" description="Low complexity" evidence="5">
    <location>
        <begin position="52"/>
        <end position="87"/>
    </location>
</feature>
<feature type="compositionally biased region" description="Low complexity" evidence="5">
    <location>
        <begin position="167"/>
        <end position="180"/>
    </location>
</feature>
<feature type="compositionally biased region" description="Low complexity" evidence="5">
    <location>
        <begin position="191"/>
        <end position="225"/>
    </location>
</feature>
<feature type="active site" evidence="3">
    <location>
        <position position="754"/>
    </location>
</feature>
<feature type="active site" evidence="4">
    <location>
        <position position="779"/>
    </location>
</feature>
<feature type="site" description="Cleavage; by SUB1" evidence="1">
    <location>
        <begin position="184"/>
        <end position="185"/>
    </location>
</feature>
<feature type="site" description="Cleavage; by SUB1" evidence="1">
    <location>
        <begin position="382"/>
        <end position="383"/>
    </location>
</feature>
<feature type="site" description="Ancestral active site" evidence="1">
    <location>
        <position position="588"/>
    </location>
</feature>
<feature type="site" description="Cleavage" evidence="1">
    <location>
        <begin position="834"/>
        <end position="835"/>
    </location>
</feature>
<feature type="site" description="Cleavage; by SUB1" evidence="1">
    <location>
        <begin position="878"/>
        <end position="879"/>
    </location>
</feature>
<feature type="modified residue" description="Phosphoserine" evidence="1">
    <location>
        <position position="167"/>
    </location>
</feature>
<feature type="modified residue" description="Phosphothreonine" evidence="1">
    <location>
        <position position="541"/>
    </location>
</feature>
<feature type="modified residue" description="Phosphoserine" evidence="1">
    <location>
        <position position="858"/>
    </location>
</feature>
<feature type="glycosylation site" description="N-linked (GlcNAc...) asparagine" evidence="2">
    <location>
        <position position="168"/>
    </location>
</feature>
<feature type="glycosylation site" description="N-linked (GlcNAc...) asparagine" evidence="2">
    <location>
        <position position="310"/>
    </location>
</feature>
<feature type="glycosylation site" description="N-linked (GlcNAc...) asparagine" evidence="2">
    <location>
        <position position="820"/>
    </location>
</feature>
<feature type="disulfide bond" evidence="1">
    <location>
        <begin position="437"/>
        <end position="489"/>
    </location>
</feature>
<feature type="disulfide bond" evidence="1">
    <location>
        <begin position="559"/>
        <end position="564"/>
    </location>
</feature>
<feature type="disulfide bond" evidence="1">
    <location>
        <begin position="573"/>
        <end position="602"/>
    </location>
</feature>
<feature type="disulfide bond" evidence="1">
    <location>
        <begin position="585"/>
        <end position="628"/>
    </location>
</feature>
<feature type="disulfide bond" evidence="1">
    <location>
        <begin position="619"/>
        <end position="664"/>
    </location>
</feature>
<feature type="disulfide bond" evidence="1">
    <location>
        <begin position="747"/>
        <end position="801"/>
    </location>
</feature>
<accession>P69193</accession>
<accession>P13823</accession>
<name>SERA5_PLAFD</name>
<dbReference type="EC" id="3.4.22.-" evidence="1"/>
<dbReference type="EMBL" id="U08113">
    <property type="protein sequence ID" value="AAA74911.1"/>
    <property type="molecule type" value="Genomic_DNA"/>
</dbReference>
<dbReference type="BMRB" id="P69193"/>
<dbReference type="SMR" id="P69193"/>
<dbReference type="MEROPS" id="C01.984"/>
<dbReference type="GlyCosmos" id="P69193">
    <property type="glycosylation" value="3 sites, No reported glycans"/>
</dbReference>
<dbReference type="GO" id="GO:0005886">
    <property type="term" value="C:plasma membrane"/>
    <property type="evidence" value="ECO:0007669"/>
    <property type="project" value="UniProtKB-SubCell"/>
</dbReference>
<dbReference type="GO" id="GO:0020004">
    <property type="term" value="C:symbiont-containing vacuolar space"/>
    <property type="evidence" value="ECO:0000314"/>
    <property type="project" value="UniProtKB"/>
</dbReference>
<dbReference type="GO" id="GO:0008234">
    <property type="term" value="F:cysteine-type peptidase activity"/>
    <property type="evidence" value="ECO:0007669"/>
    <property type="project" value="UniProtKB-KW"/>
</dbReference>
<dbReference type="GO" id="GO:0006508">
    <property type="term" value="P:proteolysis"/>
    <property type="evidence" value="ECO:0007669"/>
    <property type="project" value="UniProtKB-KW"/>
</dbReference>
<dbReference type="CDD" id="cd02619">
    <property type="entry name" value="Peptidase_C1"/>
    <property type="match status" value="1"/>
</dbReference>
<dbReference type="FunFam" id="3.90.70.10:FF:000036">
    <property type="entry name" value="Serine repeat antigen 5"/>
    <property type="match status" value="1"/>
</dbReference>
<dbReference type="Gene3D" id="3.90.70.10">
    <property type="entry name" value="Cysteine proteinases"/>
    <property type="match status" value="1"/>
</dbReference>
<dbReference type="InterPro" id="IPR038765">
    <property type="entry name" value="Papain-like_cys_pep_sf"/>
</dbReference>
<dbReference type="InterPro" id="IPR025661">
    <property type="entry name" value="Pept_asp_AS"/>
</dbReference>
<dbReference type="InterPro" id="IPR025660">
    <property type="entry name" value="Pept_his_AS"/>
</dbReference>
<dbReference type="InterPro" id="IPR013128">
    <property type="entry name" value="Peptidase_C1A"/>
</dbReference>
<dbReference type="InterPro" id="IPR000668">
    <property type="entry name" value="Peptidase_C1A_C"/>
</dbReference>
<dbReference type="PANTHER" id="PTHR12411">
    <property type="entry name" value="CYSTEINE PROTEASE FAMILY C1-RELATED"/>
    <property type="match status" value="1"/>
</dbReference>
<dbReference type="Pfam" id="PF00112">
    <property type="entry name" value="Peptidase_C1"/>
    <property type="match status" value="1"/>
</dbReference>
<dbReference type="SMART" id="SM00645">
    <property type="entry name" value="Pept_C1"/>
    <property type="match status" value="1"/>
</dbReference>
<dbReference type="SUPFAM" id="SSF54001">
    <property type="entry name" value="Cysteine proteinases"/>
    <property type="match status" value="1"/>
</dbReference>
<dbReference type="PROSITE" id="PS00640">
    <property type="entry name" value="THIOL_PROTEASE_ASN"/>
    <property type="match status" value="1"/>
</dbReference>
<dbReference type="PROSITE" id="PS00639">
    <property type="entry name" value="THIOL_PROTEASE_HIS"/>
    <property type="match status" value="1"/>
</dbReference>
<protein>
    <recommendedName>
        <fullName evidence="13">Serine-repeat antigen protein 5</fullName>
        <ecNumber evidence="1">3.4.22.-</ecNumber>
    </recommendedName>
    <alternativeName>
        <fullName>111 kDa antigen</fullName>
    </alternativeName>
    <alternativeName>
        <fullName evidence="13">Serine protease SERA5</fullName>
    </alternativeName>
    <alternativeName>
        <fullName>p126</fullName>
    </alternativeName>
    <component>
        <recommendedName>
            <fullName evidence="10">p47</fullName>
        </recommendedName>
        <alternativeName>
            <fullName evidence="11">SER36</fullName>
        </alternativeName>
    </component>
    <component>
        <recommendedName>
            <fullName evidence="10">p56</fullName>
        </recommendedName>
    </component>
    <component>
        <recommendedName>
            <fullName evidence="10">p50</fullName>
        </recommendedName>
    </component>
    <component>
        <recommendedName>
            <fullName evidence="10">p18</fullName>
        </recommendedName>
    </component>
    <component>
        <recommendedName>
            <fullName evidence="10">p25n</fullName>
        </recommendedName>
    </component>
    <component>
        <recommendedName>
            <fullName evidence="10">p25c</fullName>
        </recommendedName>
    </component>
</protein>
<reference key="1">
    <citation type="journal article" date="1994" name="Mol. Biochem. Parasitol.">
        <title>Analysis of stage-specific transcripts of the Plasmodium falciparum serine repeat antigen (SERA) gene and transcription from the SERA locus.</title>
        <authorList>
            <person name="Fox B.A."/>
            <person name="Bzik D.J."/>
        </authorList>
    </citation>
    <scope>NUCLEOTIDE SEQUENCE [GENOMIC DNA]</scope>
    <scope>DEVELOPMENTAL STAGE</scope>
</reference>
<reference key="2">
    <citation type="journal article" date="2002" name="J. Biol. Chem.">
        <title>Serine repeat antigen (SERA5) is predominantly expressed among the SERA multigene family of Plasmodium falciparum, and the acquired antibody titers correlate with serum inhibition of the parasite growth.</title>
        <authorList>
            <person name="Aoki S."/>
            <person name="Li J."/>
            <person name="Itagaki S."/>
            <person name="Okech B.A."/>
            <person name="Egwang T.G."/>
            <person name="Matsuoka H."/>
            <person name="Palacpac N.M."/>
            <person name="Mitamura T."/>
            <person name="Horii T."/>
        </authorList>
    </citation>
    <scope>FUNCTION</scope>
    <scope>SUBCELLULAR LOCATION</scope>
    <scope>DEVELOPMENTAL STAGE</scope>
    <scope>BIOTECHNOLOGY</scope>
    <scope>DISULFIDE BOND</scope>
</reference>
<reference key="3">
    <citation type="journal article" date="2002" name="Parasitol. Int.">
        <title>Differential localization of processed fragments of Plasmodium falciparum serine repeat antigen and further processing of its N-terminal 47 kDa fragment.</title>
        <authorList>
            <person name="Li J."/>
            <person name="Mitamura T."/>
            <person name="Fox B.A."/>
            <person name="Bzik D.J."/>
            <person name="Horii T."/>
        </authorList>
    </citation>
    <scope>SUBCELLULAR LOCATION</scope>
    <scope>DEVELOPMENTAL STAGE</scope>
    <scope>PROTEOLYTIC CLEAVAGE</scope>
    <scope>DISULFIDE BOND</scope>
</reference>
<reference key="4">
    <citation type="journal article" date="2018" name="Sci. Rep.">
        <title>Molecular Camouflage of Plasmodium falciparum Merozoites by Binding of Host Vitronectin to P47 Fragment of SERA5.</title>
        <authorList>
            <person name="Tougan T."/>
            <person name="Edula J.R."/>
            <person name="Takashima E."/>
            <person name="Morita M."/>
            <person name="Shinohara M."/>
            <person name="Shinohara A."/>
            <person name="Tsuboi T."/>
            <person name="Horii T."/>
        </authorList>
    </citation>
    <scope>FUNCTION</scope>
    <scope>INTERACTION WITH HUMAN VTN</scope>
    <scope>BIOTECHNOLOGY</scope>
</reference>